<reference key="1">
    <citation type="journal article" date="2008" name="PLoS Genet.">
        <title>Complete genome sequence of the complex carbohydrate-degrading marine bacterium, Saccharophagus degradans strain 2-40 T.</title>
        <authorList>
            <person name="Weiner R.M."/>
            <person name="Taylor L.E. II"/>
            <person name="Henrissat B."/>
            <person name="Hauser L."/>
            <person name="Land M."/>
            <person name="Coutinho P.M."/>
            <person name="Rancurel C."/>
            <person name="Saunders E.H."/>
            <person name="Longmire A.G."/>
            <person name="Zhang H."/>
            <person name="Bayer E.A."/>
            <person name="Gilbert H.J."/>
            <person name="Larimer F."/>
            <person name="Zhulin I.B."/>
            <person name="Ekborg N.A."/>
            <person name="Lamed R."/>
            <person name="Richardson P.M."/>
            <person name="Borovok I."/>
            <person name="Hutcheson S."/>
        </authorList>
    </citation>
    <scope>NUCLEOTIDE SEQUENCE [LARGE SCALE GENOMIC DNA]</scope>
    <source>
        <strain>2-40 / ATCC 43961 / DSM 17024</strain>
    </source>
</reference>
<dbReference type="EC" id="2.5.1.78" evidence="1"/>
<dbReference type="EMBL" id="CP000282">
    <property type="protein sequence ID" value="ABD82710.1"/>
    <property type="molecule type" value="Genomic_DNA"/>
</dbReference>
<dbReference type="RefSeq" id="WP_011469926.1">
    <property type="nucleotide sequence ID" value="NC_007912.1"/>
</dbReference>
<dbReference type="SMR" id="Q21F19"/>
<dbReference type="STRING" id="203122.Sde_3455"/>
<dbReference type="GeneID" id="98615070"/>
<dbReference type="KEGG" id="sde:Sde_3455"/>
<dbReference type="eggNOG" id="COG0054">
    <property type="taxonomic scope" value="Bacteria"/>
</dbReference>
<dbReference type="HOGENOM" id="CLU_089358_1_1_6"/>
<dbReference type="OrthoDB" id="9809709at2"/>
<dbReference type="UniPathway" id="UPA00275">
    <property type="reaction ID" value="UER00404"/>
</dbReference>
<dbReference type="Proteomes" id="UP000001947">
    <property type="component" value="Chromosome"/>
</dbReference>
<dbReference type="GO" id="GO:0005829">
    <property type="term" value="C:cytosol"/>
    <property type="evidence" value="ECO:0007669"/>
    <property type="project" value="TreeGrafter"/>
</dbReference>
<dbReference type="GO" id="GO:0009349">
    <property type="term" value="C:riboflavin synthase complex"/>
    <property type="evidence" value="ECO:0007669"/>
    <property type="project" value="InterPro"/>
</dbReference>
<dbReference type="GO" id="GO:0000906">
    <property type="term" value="F:6,7-dimethyl-8-ribityllumazine synthase activity"/>
    <property type="evidence" value="ECO:0007669"/>
    <property type="project" value="UniProtKB-UniRule"/>
</dbReference>
<dbReference type="GO" id="GO:0009231">
    <property type="term" value="P:riboflavin biosynthetic process"/>
    <property type="evidence" value="ECO:0007669"/>
    <property type="project" value="UniProtKB-UniRule"/>
</dbReference>
<dbReference type="CDD" id="cd09209">
    <property type="entry name" value="Lumazine_synthase-I"/>
    <property type="match status" value="1"/>
</dbReference>
<dbReference type="FunFam" id="3.40.50.960:FF:000001">
    <property type="entry name" value="6,7-dimethyl-8-ribityllumazine synthase"/>
    <property type="match status" value="1"/>
</dbReference>
<dbReference type="Gene3D" id="3.40.50.960">
    <property type="entry name" value="Lumazine/riboflavin synthase"/>
    <property type="match status" value="1"/>
</dbReference>
<dbReference type="HAMAP" id="MF_00178">
    <property type="entry name" value="Lumazine_synth"/>
    <property type="match status" value="1"/>
</dbReference>
<dbReference type="InterPro" id="IPR034964">
    <property type="entry name" value="LS"/>
</dbReference>
<dbReference type="InterPro" id="IPR002180">
    <property type="entry name" value="LS/RS"/>
</dbReference>
<dbReference type="InterPro" id="IPR036467">
    <property type="entry name" value="LS/RS_sf"/>
</dbReference>
<dbReference type="NCBIfam" id="TIGR00114">
    <property type="entry name" value="lumazine-synth"/>
    <property type="match status" value="1"/>
</dbReference>
<dbReference type="NCBIfam" id="NF000812">
    <property type="entry name" value="PRK00061.1-4"/>
    <property type="match status" value="1"/>
</dbReference>
<dbReference type="PANTHER" id="PTHR21058:SF0">
    <property type="entry name" value="6,7-DIMETHYL-8-RIBITYLLUMAZINE SYNTHASE"/>
    <property type="match status" value="1"/>
</dbReference>
<dbReference type="PANTHER" id="PTHR21058">
    <property type="entry name" value="6,7-DIMETHYL-8-RIBITYLLUMAZINE SYNTHASE DMRL SYNTHASE LUMAZINE SYNTHASE"/>
    <property type="match status" value="1"/>
</dbReference>
<dbReference type="Pfam" id="PF00885">
    <property type="entry name" value="DMRL_synthase"/>
    <property type="match status" value="1"/>
</dbReference>
<dbReference type="SUPFAM" id="SSF52121">
    <property type="entry name" value="Lumazine synthase"/>
    <property type="match status" value="1"/>
</dbReference>
<sequence length="155" mass="16452">MTIKVIEGDFKASTGKYALLVSRWNSFVVEHLKDGAIDTLRRHGISDENIEVIYAPGAFEFPLAAQKLADAKRYDAIIALGAVIRGGTPHFDYVAGECTKGLAQVSLNAGLPITFGVLTVDSIEQAIERSGTKAGNKGAEAASTALEMVSLISKI</sequence>
<name>RISB_SACD2</name>
<organism>
    <name type="scientific">Saccharophagus degradans (strain 2-40 / ATCC 43961 / DSM 17024)</name>
    <dbReference type="NCBI Taxonomy" id="203122"/>
    <lineage>
        <taxon>Bacteria</taxon>
        <taxon>Pseudomonadati</taxon>
        <taxon>Pseudomonadota</taxon>
        <taxon>Gammaproteobacteria</taxon>
        <taxon>Cellvibrionales</taxon>
        <taxon>Cellvibrionaceae</taxon>
        <taxon>Saccharophagus</taxon>
    </lineage>
</organism>
<accession>Q21F19</accession>
<proteinExistence type="inferred from homology"/>
<comment type="function">
    <text evidence="1">Catalyzes the formation of 6,7-dimethyl-8-ribityllumazine by condensation of 5-amino-6-(D-ribitylamino)uracil with 3,4-dihydroxy-2-butanone 4-phosphate. This is the penultimate step in the biosynthesis of riboflavin.</text>
</comment>
<comment type="catalytic activity">
    <reaction evidence="1">
        <text>(2S)-2-hydroxy-3-oxobutyl phosphate + 5-amino-6-(D-ribitylamino)uracil = 6,7-dimethyl-8-(1-D-ribityl)lumazine + phosphate + 2 H2O + H(+)</text>
        <dbReference type="Rhea" id="RHEA:26152"/>
        <dbReference type="ChEBI" id="CHEBI:15377"/>
        <dbReference type="ChEBI" id="CHEBI:15378"/>
        <dbReference type="ChEBI" id="CHEBI:15934"/>
        <dbReference type="ChEBI" id="CHEBI:43474"/>
        <dbReference type="ChEBI" id="CHEBI:58201"/>
        <dbReference type="ChEBI" id="CHEBI:58830"/>
        <dbReference type="EC" id="2.5.1.78"/>
    </reaction>
</comment>
<comment type="pathway">
    <text evidence="1">Cofactor biosynthesis; riboflavin biosynthesis; riboflavin from 2-hydroxy-3-oxobutyl phosphate and 5-amino-6-(D-ribitylamino)uracil: step 1/2.</text>
</comment>
<comment type="subunit">
    <text evidence="1">Forms an icosahedral capsid composed of 60 subunits, arranged as a dodecamer of pentamers.</text>
</comment>
<comment type="similarity">
    <text evidence="1">Belongs to the DMRL synthase family.</text>
</comment>
<keyword id="KW-1185">Reference proteome</keyword>
<keyword id="KW-0686">Riboflavin biosynthesis</keyword>
<keyword id="KW-0808">Transferase</keyword>
<gene>
    <name evidence="1" type="primary">ribH</name>
    <name type="ordered locus">Sde_3455</name>
</gene>
<evidence type="ECO:0000255" key="1">
    <source>
        <dbReference type="HAMAP-Rule" id="MF_00178"/>
    </source>
</evidence>
<protein>
    <recommendedName>
        <fullName evidence="1">6,7-dimethyl-8-ribityllumazine synthase</fullName>
        <shortName evidence="1">DMRL synthase</shortName>
        <shortName evidence="1">LS</shortName>
        <shortName evidence="1">Lumazine synthase</shortName>
        <ecNumber evidence="1">2.5.1.78</ecNumber>
    </recommendedName>
</protein>
<feature type="chain" id="PRO_1000040501" description="6,7-dimethyl-8-ribityllumazine synthase">
    <location>
        <begin position="1"/>
        <end position="155"/>
    </location>
</feature>
<feature type="active site" description="Proton donor" evidence="1">
    <location>
        <position position="90"/>
    </location>
</feature>
<feature type="binding site" evidence="1">
    <location>
        <position position="24"/>
    </location>
    <ligand>
        <name>5-amino-6-(D-ribitylamino)uracil</name>
        <dbReference type="ChEBI" id="CHEBI:15934"/>
    </ligand>
</feature>
<feature type="binding site" evidence="1">
    <location>
        <begin position="58"/>
        <end position="60"/>
    </location>
    <ligand>
        <name>5-amino-6-(D-ribitylamino)uracil</name>
        <dbReference type="ChEBI" id="CHEBI:15934"/>
    </ligand>
</feature>
<feature type="binding site" evidence="1">
    <location>
        <begin position="82"/>
        <end position="84"/>
    </location>
    <ligand>
        <name>5-amino-6-(D-ribitylamino)uracil</name>
        <dbReference type="ChEBI" id="CHEBI:15934"/>
    </ligand>
</feature>
<feature type="binding site" evidence="1">
    <location>
        <begin position="87"/>
        <end position="88"/>
    </location>
    <ligand>
        <name>(2S)-2-hydroxy-3-oxobutyl phosphate</name>
        <dbReference type="ChEBI" id="CHEBI:58830"/>
    </ligand>
</feature>
<feature type="binding site" evidence="1">
    <location>
        <position position="115"/>
    </location>
    <ligand>
        <name>5-amino-6-(D-ribitylamino)uracil</name>
        <dbReference type="ChEBI" id="CHEBI:15934"/>
    </ligand>
</feature>
<feature type="binding site" evidence="1">
    <location>
        <position position="129"/>
    </location>
    <ligand>
        <name>(2S)-2-hydroxy-3-oxobutyl phosphate</name>
        <dbReference type="ChEBI" id="CHEBI:58830"/>
    </ligand>
</feature>